<reference key="1">
    <citation type="submission" date="2005-05" db="EMBL/GenBank/DDBJ databases">
        <title>Isolation of the glycerol-3-phosphate dehydrogenase gene from Candida tropicalis and its application to gene expression in Saccharomyces cerevisiae.</title>
        <authorList>
            <person name="He F."/>
            <person name="Chen Y."/>
        </authorList>
    </citation>
    <scope>NUCLEOTIDE SEQUENCE [GENOMIC DNA]</scope>
</reference>
<dbReference type="EC" id="1.1.1.8"/>
<dbReference type="EMBL" id="DQ064595">
    <property type="protein sequence ID" value="AAY63996.1"/>
    <property type="molecule type" value="Genomic_DNA"/>
</dbReference>
<dbReference type="SMR" id="Q4PNS1"/>
<dbReference type="VEuPathDB" id="FungiDB:CTMYA2_011940"/>
<dbReference type="VEuPathDB" id="FungiDB:CTRG_02011"/>
<dbReference type="GO" id="GO:0005829">
    <property type="term" value="C:cytosol"/>
    <property type="evidence" value="ECO:0007669"/>
    <property type="project" value="TreeGrafter"/>
</dbReference>
<dbReference type="GO" id="GO:0005634">
    <property type="term" value="C:nucleus"/>
    <property type="evidence" value="ECO:0007669"/>
    <property type="project" value="TreeGrafter"/>
</dbReference>
<dbReference type="GO" id="GO:0141152">
    <property type="term" value="F:glycerol-3-phosphate dehydrogenase (NAD+) activity"/>
    <property type="evidence" value="ECO:0007669"/>
    <property type="project" value="UniProtKB-EC"/>
</dbReference>
<dbReference type="GO" id="GO:0051287">
    <property type="term" value="F:NAD binding"/>
    <property type="evidence" value="ECO:0007669"/>
    <property type="project" value="InterPro"/>
</dbReference>
<dbReference type="GO" id="GO:0042803">
    <property type="term" value="F:protein homodimerization activity"/>
    <property type="evidence" value="ECO:0007669"/>
    <property type="project" value="InterPro"/>
</dbReference>
<dbReference type="GO" id="GO:0005975">
    <property type="term" value="P:carbohydrate metabolic process"/>
    <property type="evidence" value="ECO:0007669"/>
    <property type="project" value="InterPro"/>
</dbReference>
<dbReference type="GO" id="GO:0046168">
    <property type="term" value="P:glycerol-3-phosphate catabolic process"/>
    <property type="evidence" value="ECO:0007669"/>
    <property type="project" value="InterPro"/>
</dbReference>
<dbReference type="FunFam" id="1.10.1040.10:FF:000004">
    <property type="entry name" value="Glycerol-3-phosphate dehydrogenase [NAD(+)]"/>
    <property type="match status" value="1"/>
</dbReference>
<dbReference type="FunFam" id="3.40.50.720:FF:000294">
    <property type="entry name" value="Glycerol-3-phosphate dehydrogenase [NAD(+)]"/>
    <property type="match status" value="1"/>
</dbReference>
<dbReference type="Gene3D" id="1.10.1040.10">
    <property type="entry name" value="N-(1-d-carboxylethyl)-l-norvaline Dehydrogenase, domain 2"/>
    <property type="match status" value="1"/>
</dbReference>
<dbReference type="Gene3D" id="3.40.50.720">
    <property type="entry name" value="NAD(P)-binding Rossmann-like Domain"/>
    <property type="match status" value="1"/>
</dbReference>
<dbReference type="InterPro" id="IPR008927">
    <property type="entry name" value="6-PGluconate_DH-like_C_sf"/>
</dbReference>
<dbReference type="InterPro" id="IPR013328">
    <property type="entry name" value="6PGD_dom2"/>
</dbReference>
<dbReference type="InterPro" id="IPR006168">
    <property type="entry name" value="G3P_DH_NAD-dep"/>
</dbReference>
<dbReference type="InterPro" id="IPR006109">
    <property type="entry name" value="G3P_DH_NAD-dep_C"/>
</dbReference>
<dbReference type="InterPro" id="IPR017751">
    <property type="entry name" value="G3P_DH_NAD-dep_euk"/>
</dbReference>
<dbReference type="InterPro" id="IPR011128">
    <property type="entry name" value="G3P_DH_NAD-dep_N"/>
</dbReference>
<dbReference type="InterPro" id="IPR036291">
    <property type="entry name" value="NAD(P)-bd_dom_sf"/>
</dbReference>
<dbReference type="NCBIfam" id="TIGR03376">
    <property type="entry name" value="glycerol3P_DH"/>
    <property type="match status" value="1"/>
</dbReference>
<dbReference type="PANTHER" id="PTHR11728">
    <property type="entry name" value="GLYCEROL-3-PHOSPHATE DEHYDROGENASE"/>
    <property type="match status" value="1"/>
</dbReference>
<dbReference type="PANTHER" id="PTHR11728:SF8">
    <property type="entry name" value="GLYCEROL-3-PHOSPHATE DEHYDROGENASE [NAD(+)]-RELATED"/>
    <property type="match status" value="1"/>
</dbReference>
<dbReference type="Pfam" id="PF07479">
    <property type="entry name" value="NAD_Gly3P_dh_C"/>
    <property type="match status" value="1"/>
</dbReference>
<dbReference type="Pfam" id="PF01210">
    <property type="entry name" value="NAD_Gly3P_dh_N"/>
    <property type="match status" value="1"/>
</dbReference>
<dbReference type="PIRSF" id="PIRSF000114">
    <property type="entry name" value="Glycerol-3-P_dh"/>
    <property type="match status" value="1"/>
</dbReference>
<dbReference type="PRINTS" id="PR00077">
    <property type="entry name" value="GPDHDRGNASE"/>
</dbReference>
<dbReference type="SUPFAM" id="SSF48179">
    <property type="entry name" value="6-phosphogluconate dehydrogenase C-terminal domain-like"/>
    <property type="match status" value="1"/>
</dbReference>
<dbReference type="SUPFAM" id="SSF51735">
    <property type="entry name" value="NAD(P)-binding Rossmann-fold domains"/>
    <property type="match status" value="1"/>
</dbReference>
<dbReference type="PROSITE" id="PS00957">
    <property type="entry name" value="NAD_G3PDH"/>
    <property type="match status" value="1"/>
</dbReference>
<accession>Q4PNS1</accession>
<proteinExistence type="inferred from homology"/>
<keyword id="KW-0520">NAD</keyword>
<keyword id="KW-0560">Oxidoreductase</keyword>
<organism>
    <name type="scientific">Candida tropicalis</name>
    <name type="common">Yeast</name>
    <dbReference type="NCBI Taxonomy" id="5482"/>
    <lineage>
        <taxon>Eukaryota</taxon>
        <taxon>Fungi</taxon>
        <taxon>Dikarya</taxon>
        <taxon>Ascomycota</taxon>
        <taxon>Saccharomycotina</taxon>
        <taxon>Pichiomycetes</taxon>
        <taxon>Debaryomycetaceae</taxon>
        <taxon>Candida/Lodderomyces clade</taxon>
        <taxon>Candida</taxon>
    </lineage>
</organism>
<comment type="catalytic activity">
    <reaction>
        <text>sn-glycerol 3-phosphate + NAD(+) = dihydroxyacetone phosphate + NADH + H(+)</text>
        <dbReference type="Rhea" id="RHEA:11092"/>
        <dbReference type="ChEBI" id="CHEBI:15378"/>
        <dbReference type="ChEBI" id="CHEBI:57540"/>
        <dbReference type="ChEBI" id="CHEBI:57597"/>
        <dbReference type="ChEBI" id="CHEBI:57642"/>
        <dbReference type="ChEBI" id="CHEBI:57945"/>
        <dbReference type="EC" id="1.1.1.8"/>
    </reaction>
</comment>
<comment type="similarity">
    <text evidence="2">Belongs to the NAD-dependent glycerol-3-phosphate dehydrogenase family.</text>
</comment>
<gene>
    <name type="primary">GPD</name>
</gene>
<feature type="chain" id="PRO_0000138088" description="Glycerol-3-phosphate dehydrogenase [NAD(+)]">
    <location>
        <begin position="1"/>
        <end position="391"/>
    </location>
</feature>
<feature type="active site" description="Proton acceptor" evidence="1">
    <location>
        <position position="250"/>
    </location>
</feature>
<feature type="binding site" evidence="1">
    <location>
        <begin position="46"/>
        <end position="51"/>
    </location>
    <ligand>
        <name>NAD(+)</name>
        <dbReference type="ChEBI" id="CHEBI:57540"/>
    </ligand>
</feature>
<feature type="binding site" evidence="1">
    <location>
        <position position="78"/>
    </location>
    <ligand>
        <name>NAD(+)</name>
        <dbReference type="ChEBI" id="CHEBI:57540"/>
    </ligand>
</feature>
<feature type="binding site" evidence="1">
    <location>
        <position position="134"/>
    </location>
    <ligand>
        <name>NAD(+)</name>
        <dbReference type="ChEBI" id="CHEBI:57540"/>
    </ligand>
</feature>
<feature type="binding site" evidence="1">
    <location>
        <position position="157"/>
    </location>
    <ligand>
        <name>substrate</name>
    </ligand>
</feature>
<feature type="binding site" evidence="1">
    <location>
        <position position="190"/>
    </location>
    <ligand>
        <name>NAD(+)</name>
        <dbReference type="ChEBI" id="CHEBI:57540"/>
    </ligand>
</feature>
<feature type="binding site" evidence="1">
    <location>
        <begin position="315"/>
        <end position="316"/>
    </location>
    <ligand>
        <name>substrate</name>
    </ligand>
</feature>
<feature type="binding site" evidence="1">
    <location>
        <position position="315"/>
    </location>
    <ligand>
        <name>NAD(+)</name>
        <dbReference type="ChEBI" id="CHEBI:57540"/>
    </ligand>
</feature>
<feature type="binding site" evidence="1">
    <location>
        <position position="344"/>
    </location>
    <ligand>
        <name>NAD(+)</name>
        <dbReference type="ChEBI" id="CHEBI:57540"/>
    </ligand>
</feature>
<sequence length="391" mass="42536">MCTSANNRLDQLTQILHPENLLNPTNASHPESSLRPDHPFKIAVVGSGNWGTTIAKIVSENAVARPHLFSHFVNMWVFEEKIDGTNLTEIINTRHENIKYLPGVKLPKNLIAVPDIVKAVKGADLIVFNLPHQFLPRILKQLKGHVPKTTRAISCLKGLEVNANGCKLLSTVIEEELGIACGALSGANLAPEIARGNWSETTVAYRVPADYRGPGKDIDKLVLKALFHRPYFHVNVIDDVAGVSIAGALKNVVALAVGFVEGLGWGDNAKAAVMRVGLLETIKFAKLFFNDAEIDTFTGESAGVADLITTCSGGRNVKVGRYMAETGCAAEEAEKKLLNGQSSQGIVTTKEVHEFLTNVNKLEEFPLFEATYQITFGSESIENLPNLLNNY</sequence>
<evidence type="ECO:0000250" key="1">
    <source>
        <dbReference type="UniProtKB" id="P21695"/>
    </source>
</evidence>
<evidence type="ECO:0000305" key="2"/>
<name>GPD_CANTR</name>
<protein>
    <recommendedName>
        <fullName>Glycerol-3-phosphate dehydrogenase [NAD(+)]</fullName>
        <ecNumber>1.1.1.8</ecNumber>
    </recommendedName>
</protein>